<dbReference type="EC" id="6.3.4.-" evidence="1"/>
<dbReference type="EMBL" id="BA000004">
    <property type="protein sequence ID" value="BAB06304.1"/>
    <property type="molecule type" value="Genomic_DNA"/>
</dbReference>
<dbReference type="PIR" id="A83973">
    <property type="entry name" value="A83973"/>
</dbReference>
<dbReference type="RefSeq" id="WP_010898736.1">
    <property type="nucleotide sequence ID" value="NC_002570.2"/>
</dbReference>
<dbReference type="SMR" id="Q9K9R0"/>
<dbReference type="STRING" id="272558.gene:10728483"/>
<dbReference type="GeneID" id="87598098"/>
<dbReference type="KEGG" id="bha:BH2585"/>
<dbReference type="eggNOG" id="COG1323">
    <property type="taxonomic scope" value="Bacteria"/>
</dbReference>
<dbReference type="HOGENOM" id="CLU_038915_0_2_9"/>
<dbReference type="OrthoDB" id="9769796at2"/>
<dbReference type="Proteomes" id="UP000001258">
    <property type="component" value="Chromosome"/>
</dbReference>
<dbReference type="GO" id="GO:0005737">
    <property type="term" value="C:cytoplasm"/>
    <property type="evidence" value="ECO:0007669"/>
    <property type="project" value="UniProtKB-SubCell"/>
</dbReference>
<dbReference type="GO" id="GO:0005524">
    <property type="term" value="F:ATP binding"/>
    <property type="evidence" value="ECO:0007669"/>
    <property type="project" value="UniProtKB-KW"/>
</dbReference>
<dbReference type="GO" id="GO:0016879">
    <property type="term" value="F:ligase activity, forming carbon-nitrogen bonds"/>
    <property type="evidence" value="ECO:0007669"/>
    <property type="project" value="UniProtKB-UniRule"/>
</dbReference>
<dbReference type="GO" id="GO:0000049">
    <property type="term" value="F:tRNA binding"/>
    <property type="evidence" value="ECO:0007669"/>
    <property type="project" value="UniProtKB-KW"/>
</dbReference>
<dbReference type="GO" id="GO:0006400">
    <property type="term" value="P:tRNA modification"/>
    <property type="evidence" value="ECO:0007669"/>
    <property type="project" value="UniProtKB-UniRule"/>
</dbReference>
<dbReference type="Gene3D" id="3.40.50.620">
    <property type="entry name" value="HUPs"/>
    <property type="match status" value="1"/>
</dbReference>
<dbReference type="HAMAP" id="MF_01539">
    <property type="entry name" value="TmcAL"/>
    <property type="match status" value="1"/>
</dbReference>
<dbReference type="InterPro" id="IPR014729">
    <property type="entry name" value="Rossmann-like_a/b/a_fold"/>
</dbReference>
<dbReference type="InterPro" id="IPR008513">
    <property type="entry name" value="tRNA(Met)_cyd_acetate_ligase"/>
</dbReference>
<dbReference type="NCBIfam" id="NF010191">
    <property type="entry name" value="PRK13670.1"/>
    <property type="match status" value="1"/>
</dbReference>
<dbReference type="PANTHER" id="PTHR37825">
    <property type="entry name" value="TRNA(MET) CYTIDINE ACETATE LIGASE"/>
    <property type="match status" value="1"/>
</dbReference>
<dbReference type="PANTHER" id="PTHR37825:SF1">
    <property type="entry name" value="TRNA(MET) CYTIDINE ACETATE LIGASE"/>
    <property type="match status" value="1"/>
</dbReference>
<dbReference type="Pfam" id="PF05636">
    <property type="entry name" value="HIGH_NTase1"/>
    <property type="match status" value="1"/>
</dbReference>
<dbReference type="SUPFAM" id="SSF52374">
    <property type="entry name" value="Nucleotidylyl transferase"/>
    <property type="match status" value="1"/>
</dbReference>
<accession>Q9K9R0</accession>
<sequence length="416" mass="47715">MKAVGVVVEYNPFHNGHLHHLTEARKQAKADVVIAVMSGYFLQRGEPAILPKWERTSLALQGGADLVVELPYAFSTQKAEWFATGAVSILAALEADALCFGSEEGTIEPFHRLYHFMAKHRLAWDRMIKEELDKGMSYPTATSLAFKRLEGSAEHLDLSRPNNILGFHYVKAIYDLHTSIKAMTIPRIKAGYHDDSLNESSIASATSIRKSLKTKEGWQMVDRVVPSYTTEMLKSFEKETTFLPSWERLFPLLKYRLLTATPEQLHAIYEGEEGLEYRALKTIVSATSFHDWMTKMKTKRYTWTRIQRYATHLFTNTTKEEIHSVLPRGTESLPYIRLLGMTSRGQMYLNGKKKQLTTPVITRPAKVDDRMMNLDLRAAFSYYASFPPSLQQKRLKEEFHRTPIRIDHKPEPKKEA</sequence>
<gene>
    <name evidence="1" type="primary">tmcAL</name>
    <name type="ordered locus">BH2585</name>
</gene>
<name>TMCAL_HALH5</name>
<organism>
    <name type="scientific">Halalkalibacterium halodurans (strain ATCC BAA-125 / DSM 18197 / FERM 7344 / JCM 9153 / C-125)</name>
    <name type="common">Bacillus halodurans</name>
    <dbReference type="NCBI Taxonomy" id="272558"/>
    <lineage>
        <taxon>Bacteria</taxon>
        <taxon>Bacillati</taxon>
        <taxon>Bacillota</taxon>
        <taxon>Bacilli</taxon>
        <taxon>Bacillales</taxon>
        <taxon>Bacillaceae</taxon>
        <taxon>Halalkalibacterium (ex Joshi et al. 2022)</taxon>
    </lineage>
</organism>
<reference key="1">
    <citation type="journal article" date="2000" name="Nucleic Acids Res.">
        <title>Complete genome sequence of the alkaliphilic bacterium Bacillus halodurans and genomic sequence comparison with Bacillus subtilis.</title>
        <authorList>
            <person name="Takami H."/>
            <person name="Nakasone K."/>
            <person name="Takaki Y."/>
            <person name="Maeno G."/>
            <person name="Sasaki R."/>
            <person name="Masui N."/>
            <person name="Fuji F."/>
            <person name="Hirama C."/>
            <person name="Nakamura Y."/>
            <person name="Ogasawara N."/>
            <person name="Kuhara S."/>
            <person name="Horikoshi K."/>
        </authorList>
    </citation>
    <scope>NUCLEOTIDE SEQUENCE [LARGE SCALE GENOMIC DNA]</scope>
    <source>
        <strain>ATCC BAA-125 / DSM 18197 / FERM 7344 / JCM 9153 / C-125</strain>
    </source>
</reference>
<protein>
    <recommendedName>
        <fullName evidence="1">tRNA(Met) cytidine acetate ligase</fullName>
        <ecNumber evidence="1">6.3.4.-</ecNumber>
    </recommendedName>
</protein>
<comment type="function">
    <text evidence="1">Catalyzes the formation of N(4)-acetylcytidine (ac(4)C) at the wobble position of elongator tRNA(Met), using acetate and ATP as substrates. First activates an acetate ion to form acetyladenylate (Ac-AMP) and then transfers the acetyl group to tRNA to form ac(4)C34.</text>
</comment>
<comment type="catalytic activity">
    <reaction evidence="1">
        <text>cytidine(34) in elongator tRNA(Met) + acetate + ATP = N(4)-acetylcytidine(34) in elongator tRNA(Met) + AMP + diphosphate</text>
        <dbReference type="Rhea" id="RHEA:58144"/>
        <dbReference type="Rhea" id="RHEA-COMP:10693"/>
        <dbReference type="Rhea" id="RHEA-COMP:10694"/>
        <dbReference type="ChEBI" id="CHEBI:30089"/>
        <dbReference type="ChEBI" id="CHEBI:30616"/>
        <dbReference type="ChEBI" id="CHEBI:33019"/>
        <dbReference type="ChEBI" id="CHEBI:74900"/>
        <dbReference type="ChEBI" id="CHEBI:82748"/>
        <dbReference type="ChEBI" id="CHEBI:456215"/>
    </reaction>
</comment>
<comment type="subcellular location">
    <subcellularLocation>
        <location evidence="1">Cytoplasm</location>
    </subcellularLocation>
</comment>
<comment type="similarity">
    <text evidence="1">Belongs to the TmcAL family.</text>
</comment>
<keyword id="KW-0067">ATP-binding</keyword>
<keyword id="KW-0963">Cytoplasm</keyword>
<keyword id="KW-0436">Ligase</keyword>
<keyword id="KW-0547">Nucleotide-binding</keyword>
<keyword id="KW-1185">Reference proteome</keyword>
<keyword id="KW-0694">RNA-binding</keyword>
<keyword id="KW-0819">tRNA processing</keyword>
<keyword id="KW-0820">tRNA-binding</keyword>
<proteinExistence type="inferred from homology"/>
<evidence type="ECO:0000255" key="1">
    <source>
        <dbReference type="HAMAP-Rule" id="MF_01539"/>
    </source>
</evidence>
<feature type="chain" id="PRO_0000147156" description="tRNA(Met) cytidine acetate ligase">
    <location>
        <begin position="1"/>
        <end position="416"/>
    </location>
</feature>
<feature type="binding site" evidence="1">
    <location>
        <begin position="7"/>
        <end position="20"/>
    </location>
    <ligand>
        <name>ATP</name>
        <dbReference type="ChEBI" id="CHEBI:30616"/>
    </ligand>
</feature>
<feature type="binding site" evidence="1">
    <location>
        <position position="101"/>
    </location>
    <ligand>
        <name>ATP</name>
        <dbReference type="ChEBI" id="CHEBI:30616"/>
    </ligand>
</feature>
<feature type="binding site" evidence="1">
    <location>
        <position position="162"/>
    </location>
    <ligand>
        <name>ATP</name>
        <dbReference type="ChEBI" id="CHEBI:30616"/>
    </ligand>
</feature>
<feature type="binding site" evidence="1">
    <location>
        <begin position="187"/>
        <end position="188"/>
    </location>
    <ligand>
        <name>ATP</name>
        <dbReference type="ChEBI" id="CHEBI:30616"/>
    </ligand>
</feature>